<proteinExistence type="inferred from homology"/>
<keyword id="KW-0014">AIDS</keyword>
<keyword id="KW-1032">Host cell membrane</keyword>
<keyword id="KW-1043">Host membrane</keyword>
<keyword id="KW-0945">Host-virus interaction</keyword>
<keyword id="KW-0449">Lipoprotein</keyword>
<keyword id="KW-0472">Membrane</keyword>
<keyword id="KW-0519">Myristate</keyword>
<keyword id="KW-0899">Viral immunoevasion</keyword>
<keyword id="KW-0843">Virulence</keyword>
<dbReference type="EMBL" id="L07625">
    <property type="protein sequence ID" value="AAA43947.1"/>
    <property type="molecule type" value="Genomic_RNA"/>
</dbReference>
<dbReference type="SMR" id="Q76639"/>
<dbReference type="Proteomes" id="UP000007428">
    <property type="component" value="Segment"/>
</dbReference>
<dbReference type="GO" id="GO:0020002">
    <property type="term" value="C:host cell plasma membrane"/>
    <property type="evidence" value="ECO:0007669"/>
    <property type="project" value="UniProtKB-SubCell"/>
</dbReference>
<dbReference type="GO" id="GO:0016020">
    <property type="term" value="C:membrane"/>
    <property type="evidence" value="ECO:0007669"/>
    <property type="project" value="UniProtKB-KW"/>
</dbReference>
<dbReference type="GO" id="GO:0005525">
    <property type="term" value="F:GTP binding"/>
    <property type="evidence" value="ECO:0007669"/>
    <property type="project" value="InterPro"/>
</dbReference>
<dbReference type="Gene3D" id="3.30.62.10">
    <property type="entry name" value="Nef Regulatory Factor"/>
    <property type="match status" value="1"/>
</dbReference>
<dbReference type="InterPro" id="IPR027481">
    <property type="entry name" value="HIV-1_Nef_core_sf"/>
</dbReference>
<dbReference type="InterPro" id="IPR001558">
    <property type="entry name" value="HIV_Nef"/>
</dbReference>
<dbReference type="Pfam" id="PF00469">
    <property type="entry name" value="F-protein"/>
    <property type="match status" value="1"/>
</dbReference>
<dbReference type="SUPFAM" id="SSF55671">
    <property type="entry name" value="Regulatory factor Nef"/>
    <property type="match status" value="1"/>
</dbReference>
<accession>Q76639</accession>
<comment type="function">
    <text evidence="1">Factor of infectivity and pathogenicity, required for optimal virus replication. Alters numerous pathways of T-lymphocyte function and down-regulates immunity surface molecules in order to evade host defense and increase viral infectivity. Alters the functionality of other immunity cells, like dendritic cells, monocytes/macrophages and NK cells. One of the earliest and most abundantly expressed viral proteins (By similarity).</text>
</comment>
<comment type="function">
    <text evidence="1">In infected CD4(+) T-lymphocytes, down-regulates cell surface expression of CD4, CD28, CD3, and MHC-I or MHC-II molecules.</text>
</comment>
<comment type="function">
    <text evidence="1">Interferes with TCR signaling from the cell membrane. Interacts with CD247/TCRZ (TCR zeta chain) and exert potent down-regulation of cell surface TCR/CD3 complexes (By similarity).</text>
</comment>
<comment type="function">
    <text evidence="1">Plays a role in optimizing the host cell environment for viral replication without causing cell death by apoptosis. Protects the infected cells from apoptosis in order to keep them alive until the next virus generation is ready to strike (By similarity).</text>
</comment>
<comment type="function">
    <text evidence="1">Extracellular Nef protein targets CD4(+) T-lymphocytes for apoptosis by interacting with CXCR4 surface receptors.</text>
</comment>
<comment type="subunit">
    <text evidence="1">Homodimer. Interacts with host CD247/TCRZ; this interaction induces down-regulation of cell surface TCR/CD3 complexes.</text>
</comment>
<comment type="subcellular location">
    <subcellularLocation>
        <location evidence="1">Host cell membrane</location>
        <topology evidence="1">Lipid-anchor</topology>
        <orientation evidence="1">Cytoplasmic side</orientation>
    </subcellularLocation>
    <text evidence="1">Associates with the inner plasma membrane through its N-terminal domain.</text>
</comment>
<comment type="domain">
    <text evidence="1">The N-terminal domain is composed of the N-myristoyl glycine and of a cluster of positively charged amino acids. It is required for inner plasma membrane targeting of Nef and virion incorporation, and thereby for infectivity (By similarity).</text>
</comment>
<comment type="miscellaneous">
    <text>This isolate is from a Gambian case of 'neuro-AIDS'.</text>
</comment>
<comment type="similarity">
    <text evidence="3">Belongs to the lentivirus primate group Nef protein family.</text>
</comment>
<sequence>MGSAGSKKQSKQQRGLRERLLRTQEEPYGKLSEGQRKQSSRSPGGSDKDLNSPSCEGRNAPRAEGGGQQDTDDSDEDNEVGVYVRPNRPLRSMTYKMAIDMSHFIKEKGGLEGIYYSERRHRILDTYLENEEGIVSGWQNYTYGPGIRYPRTFGWLWKLVPVDIPEEERGAETSCLVHPAQISSWDDIHGETLAWRFDPLLAHDYVAFNRYPEEFGYQSGLPEKE</sequence>
<organismHost>
    <name type="scientific">Homo sapiens</name>
    <name type="common">Human</name>
    <dbReference type="NCBI Taxonomy" id="9606"/>
</organismHost>
<feature type="initiator methionine" description="Removed; by host" evidence="1">
    <location>
        <position position="1"/>
    </location>
</feature>
<feature type="chain" id="PRO_0000244818" description="Protein Nef">
    <location>
        <begin position="2"/>
        <end position="225"/>
    </location>
</feature>
<feature type="region of interest" description="Disordered" evidence="2">
    <location>
        <begin position="1"/>
        <end position="85"/>
    </location>
</feature>
<feature type="region of interest" description="Acidic">
    <location>
        <begin position="70"/>
        <end position="77"/>
    </location>
</feature>
<feature type="region of interest" description="Mediates dimerization" evidence="1">
    <location>
        <begin position="122"/>
        <end position="138"/>
    </location>
</feature>
<feature type="short sequence motif" description="PxxP">
    <location>
        <begin position="86"/>
        <end position="89"/>
    </location>
</feature>
<feature type="compositionally biased region" description="Basic and acidic residues" evidence="2">
    <location>
        <begin position="15"/>
        <end position="36"/>
    </location>
</feature>
<feature type="compositionally biased region" description="Acidic residues" evidence="2">
    <location>
        <begin position="70"/>
        <end position="79"/>
    </location>
</feature>
<feature type="lipid moiety-binding region" description="N-myristoyl glycine; by host" evidence="1">
    <location>
        <position position="2"/>
    </location>
</feature>
<evidence type="ECO:0000250" key="1"/>
<evidence type="ECO:0000256" key="2">
    <source>
        <dbReference type="SAM" id="MobiDB-lite"/>
    </source>
</evidence>
<evidence type="ECO:0000305" key="3"/>
<name>NEF_HV2UC</name>
<organism>
    <name type="scientific">Human immunodeficiency virus type 2 subtype B (isolate UC1)</name>
    <name type="common">HIV-2</name>
    <dbReference type="NCBI Taxonomy" id="388822"/>
    <lineage>
        <taxon>Viruses</taxon>
        <taxon>Riboviria</taxon>
        <taxon>Pararnavirae</taxon>
        <taxon>Artverviricota</taxon>
        <taxon>Revtraviricetes</taxon>
        <taxon>Ortervirales</taxon>
        <taxon>Retroviridae</taxon>
        <taxon>Orthoretrovirinae</taxon>
        <taxon>Lentivirus</taxon>
        <taxon>Human immunodeficiency virus 2</taxon>
    </lineage>
</organism>
<gene>
    <name type="primary">nef</name>
</gene>
<reference key="1">
    <citation type="journal article" date="1993" name="J. Virol.">
        <title>Distinguishing features of an infectious molecular clone of the highly divergent and noncytopathic human immunodeficiency virus type 2 UC1 strain.</title>
        <authorList>
            <person name="Barnett S.W."/>
            <person name="Quiroga M."/>
            <person name="Werner A."/>
            <person name="Dina D."/>
            <person name="Levy J.A."/>
        </authorList>
    </citation>
    <scope>NUCLEOTIDE SEQUENCE [GENOMIC RNA]</scope>
</reference>
<protein>
    <recommendedName>
        <fullName>Protein Nef</fullName>
    </recommendedName>
    <alternativeName>
        <fullName>3'ORF</fullName>
    </alternativeName>
    <alternativeName>
        <fullName>Negative factor</fullName>
        <shortName>F-protein</shortName>
    </alternativeName>
</protein>